<evidence type="ECO:0000250" key="1">
    <source>
        <dbReference type="UniProtKB" id="O48814"/>
    </source>
</evidence>
<evidence type="ECO:0000255" key="2"/>
<evidence type="ECO:0000255" key="3">
    <source>
        <dbReference type="PROSITE-ProRule" id="PRU00159"/>
    </source>
</evidence>
<evidence type="ECO:0000255" key="4">
    <source>
        <dbReference type="PROSITE-ProRule" id="PRU10027"/>
    </source>
</evidence>
<evidence type="ECO:0000269" key="5">
    <source>
    </source>
</evidence>
<evidence type="ECO:0000269" key="6">
    <source ref="4"/>
</evidence>
<evidence type="ECO:0000305" key="7"/>
<dbReference type="EC" id="2.7.11.1"/>
<dbReference type="EMBL" id="AB006705">
    <property type="protein sequence ID" value="BAB09503.1"/>
    <property type="status" value="ALT_SEQ"/>
    <property type="molecule type" value="Genomic_DNA"/>
</dbReference>
<dbReference type="EMBL" id="CP002688">
    <property type="protein sequence ID" value="AED97216.2"/>
    <property type="molecule type" value="Genomic_DNA"/>
</dbReference>
<dbReference type="EMBL" id="FJ708806">
    <property type="protein sequence ID" value="ACN59397.1"/>
    <property type="molecule type" value="mRNA"/>
</dbReference>
<dbReference type="RefSeq" id="NP_001318839.1">
    <property type="nucleotide sequence ID" value="NM_001345363.1"/>
</dbReference>
<dbReference type="SMR" id="C0LGW2"/>
<dbReference type="BioGRID" id="21330">
    <property type="interactions" value="240"/>
</dbReference>
<dbReference type="FunCoup" id="C0LGW2">
    <property type="interactions" value="1"/>
</dbReference>
<dbReference type="IntAct" id="C0LGW2">
    <property type="interactions" value="235"/>
</dbReference>
<dbReference type="STRING" id="3702.C0LGW2"/>
<dbReference type="GlyCosmos" id="C0LGW2">
    <property type="glycosylation" value="12 sites, No reported glycans"/>
</dbReference>
<dbReference type="GlyGen" id="C0LGW2">
    <property type="glycosylation" value="14 sites"/>
</dbReference>
<dbReference type="PaxDb" id="3702-AT5G59650.1"/>
<dbReference type="EnsemblPlants" id="AT5G59650.1">
    <property type="protein sequence ID" value="AT5G59650.1"/>
    <property type="gene ID" value="AT5G59650"/>
</dbReference>
<dbReference type="GeneID" id="836086"/>
<dbReference type="Gramene" id="AT5G59650.1">
    <property type="protein sequence ID" value="AT5G59650.1"/>
    <property type="gene ID" value="AT5G59650"/>
</dbReference>
<dbReference type="KEGG" id="ath:AT5G59650"/>
<dbReference type="Araport" id="AT5G59650"/>
<dbReference type="TAIR" id="AT5G59650"/>
<dbReference type="eggNOG" id="ENOG502QQCZ">
    <property type="taxonomic scope" value="Eukaryota"/>
</dbReference>
<dbReference type="HOGENOM" id="CLU_000288_41_1_1"/>
<dbReference type="InParanoid" id="C0LGW2"/>
<dbReference type="PhylomeDB" id="C0LGW2"/>
<dbReference type="PRO" id="PR:C0LGW2"/>
<dbReference type="Proteomes" id="UP000006548">
    <property type="component" value="Chromosome 5"/>
</dbReference>
<dbReference type="ExpressionAtlas" id="C0LGW2">
    <property type="expression patterns" value="baseline and differential"/>
</dbReference>
<dbReference type="GO" id="GO:0016020">
    <property type="term" value="C:membrane"/>
    <property type="evidence" value="ECO:0007669"/>
    <property type="project" value="UniProtKB-SubCell"/>
</dbReference>
<dbReference type="GO" id="GO:0005524">
    <property type="term" value="F:ATP binding"/>
    <property type="evidence" value="ECO:0007669"/>
    <property type="project" value="UniProtKB-KW"/>
</dbReference>
<dbReference type="GO" id="GO:0106310">
    <property type="term" value="F:protein serine kinase activity"/>
    <property type="evidence" value="ECO:0007669"/>
    <property type="project" value="RHEA"/>
</dbReference>
<dbReference type="GO" id="GO:0004674">
    <property type="term" value="F:protein serine/threonine kinase activity"/>
    <property type="evidence" value="ECO:0007669"/>
    <property type="project" value="UniProtKB-KW"/>
</dbReference>
<dbReference type="FunFam" id="3.80.10.10:FF:000129">
    <property type="entry name" value="Leucine-rich repeat receptor-like kinase"/>
    <property type="match status" value="1"/>
</dbReference>
<dbReference type="FunFam" id="3.30.200.20:FF:000394">
    <property type="entry name" value="Leucine-rich repeat receptor-like protein kinase"/>
    <property type="match status" value="1"/>
</dbReference>
<dbReference type="FunFam" id="1.10.510.10:FF:000146">
    <property type="entry name" value="LRR receptor-like serine/threonine-protein kinase IOS1"/>
    <property type="match status" value="1"/>
</dbReference>
<dbReference type="Gene3D" id="3.30.200.20">
    <property type="entry name" value="Phosphorylase Kinase, domain 1"/>
    <property type="match status" value="1"/>
</dbReference>
<dbReference type="Gene3D" id="3.80.10.10">
    <property type="entry name" value="Ribonuclease Inhibitor"/>
    <property type="match status" value="1"/>
</dbReference>
<dbReference type="Gene3D" id="1.10.510.10">
    <property type="entry name" value="Transferase(Phosphotransferase) domain 1"/>
    <property type="match status" value="1"/>
</dbReference>
<dbReference type="InterPro" id="IPR011009">
    <property type="entry name" value="Kinase-like_dom_sf"/>
</dbReference>
<dbReference type="InterPro" id="IPR001611">
    <property type="entry name" value="Leu-rich_rpt"/>
</dbReference>
<dbReference type="InterPro" id="IPR032675">
    <property type="entry name" value="LRR_dom_sf"/>
</dbReference>
<dbReference type="InterPro" id="IPR024788">
    <property type="entry name" value="Malectin-like_Carb-bd_dom"/>
</dbReference>
<dbReference type="InterPro" id="IPR000719">
    <property type="entry name" value="Prot_kinase_dom"/>
</dbReference>
<dbReference type="InterPro" id="IPR017441">
    <property type="entry name" value="Protein_kinase_ATP_BS"/>
</dbReference>
<dbReference type="InterPro" id="IPR008271">
    <property type="entry name" value="Ser/Thr_kinase_AS"/>
</dbReference>
<dbReference type="PANTHER" id="PTHR45631:SF22">
    <property type="entry name" value="LRR RECEPTOR-LIKE SERINE_THREONINE-PROTEIN KINASE PAM74-RELATED"/>
    <property type="match status" value="1"/>
</dbReference>
<dbReference type="PANTHER" id="PTHR45631">
    <property type="entry name" value="OS07G0107800 PROTEIN-RELATED"/>
    <property type="match status" value="1"/>
</dbReference>
<dbReference type="Pfam" id="PF13855">
    <property type="entry name" value="LRR_8"/>
    <property type="match status" value="1"/>
</dbReference>
<dbReference type="Pfam" id="PF12819">
    <property type="entry name" value="Malectin_like"/>
    <property type="match status" value="1"/>
</dbReference>
<dbReference type="Pfam" id="PF00069">
    <property type="entry name" value="Pkinase"/>
    <property type="match status" value="1"/>
</dbReference>
<dbReference type="SMART" id="SM00220">
    <property type="entry name" value="S_TKc"/>
    <property type="match status" value="1"/>
</dbReference>
<dbReference type="SUPFAM" id="SSF52058">
    <property type="entry name" value="L domain-like"/>
    <property type="match status" value="1"/>
</dbReference>
<dbReference type="SUPFAM" id="SSF56112">
    <property type="entry name" value="Protein kinase-like (PK-like)"/>
    <property type="match status" value="1"/>
</dbReference>
<dbReference type="PROSITE" id="PS00107">
    <property type="entry name" value="PROTEIN_KINASE_ATP"/>
    <property type="match status" value="1"/>
</dbReference>
<dbReference type="PROSITE" id="PS50011">
    <property type="entry name" value="PROTEIN_KINASE_DOM"/>
    <property type="match status" value="1"/>
</dbReference>
<dbReference type="PROSITE" id="PS00108">
    <property type="entry name" value="PROTEIN_KINASE_ST"/>
    <property type="match status" value="1"/>
</dbReference>
<proteinExistence type="evidence at protein level"/>
<comment type="function">
    <text evidence="6">Required for accurate photosynthesis.</text>
</comment>
<comment type="catalytic activity">
    <reaction>
        <text>L-seryl-[protein] + ATP = O-phospho-L-seryl-[protein] + ADP + H(+)</text>
        <dbReference type="Rhea" id="RHEA:17989"/>
        <dbReference type="Rhea" id="RHEA-COMP:9863"/>
        <dbReference type="Rhea" id="RHEA-COMP:11604"/>
        <dbReference type="ChEBI" id="CHEBI:15378"/>
        <dbReference type="ChEBI" id="CHEBI:29999"/>
        <dbReference type="ChEBI" id="CHEBI:30616"/>
        <dbReference type="ChEBI" id="CHEBI:83421"/>
        <dbReference type="ChEBI" id="CHEBI:456216"/>
        <dbReference type="EC" id="2.7.11.1"/>
    </reaction>
</comment>
<comment type="catalytic activity">
    <reaction>
        <text>L-threonyl-[protein] + ATP = O-phospho-L-threonyl-[protein] + ADP + H(+)</text>
        <dbReference type="Rhea" id="RHEA:46608"/>
        <dbReference type="Rhea" id="RHEA-COMP:11060"/>
        <dbReference type="Rhea" id="RHEA-COMP:11605"/>
        <dbReference type="ChEBI" id="CHEBI:15378"/>
        <dbReference type="ChEBI" id="CHEBI:30013"/>
        <dbReference type="ChEBI" id="CHEBI:30616"/>
        <dbReference type="ChEBI" id="CHEBI:61977"/>
        <dbReference type="ChEBI" id="CHEBI:456216"/>
        <dbReference type="EC" id="2.7.11.1"/>
    </reaction>
</comment>
<comment type="subunit">
    <text evidence="5">Binds to the ammonium transporter AMT1-1.</text>
</comment>
<comment type="interaction">
    <interactant intactId="EBI-16888393">
        <id>C0LGW2</id>
    </interactant>
    <interactant intactId="EBI-16902423">
        <id>C0LGD9</id>
        <label>At1g07560</label>
    </interactant>
    <organismsDiffer>false</organismsDiffer>
    <experiments>2</experiments>
</comment>
<comment type="interaction">
    <interactant intactId="EBI-16888393">
        <id>C0LGW2</id>
    </interactant>
    <interactant intactId="EBI-20653342">
        <id>A0A178UFM8</id>
        <label>At5g51560</label>
    </interactant>
    <organismsDiffer>false</organismsDiffer>
    <experiments>3</experiments>
</comment>
<comment type="subcellular location">
    <subcellularLocation>
        <location evidence="7">Membrane</location>
        <topology evidence="7">Single-pass type I membrane protein</topology>
    </subcellularLocation>
</comment>
<comment type="disruption phenotype">
    <text evidence="6">Partially lethal. Survivors turn pale green and show a stunted growth. Affected in photosynthesis; difference in the quantum efficiency of PS11.</text>
</comment>
<comment type="similarity">
    <text evidence="3">Belongs to the protein kinase superfamily. Ser/Thr protein kinase family.</text>
</comment>
<comment type="sequence caution" evidence="7">
    <conflict type="erroneous gene model prediction">
        <sequence resource="EMBL-CDS" id="BAB09503"/>
    </conflict>
</comment>
<sequence length="884" mass="98530">MDSPCWLLLLLLGAFAIIGCVQAQDQQEFISLDCGLPMTEPSSYTESVTGLRFSSDAEFIQTGESGKIQASMENDYLKPYTRLRYFPEERRNCYSLSVDKNRKYLIRARFIYGNYDGRNSNPIFELHLGPNLWATIDLQKFVNGTMEEILHTPTSNSLNVCLVKTGTTTPLISALELRPLGNNSYLTDGSLNLFVRIYLNKTDGFLRYPDDIYDRRWHNYFMVDDWTQIFTTLEVTNDNNYEPPKKALAAAATPSNASAPLTISWPPDNPGDQYYLYSHFSEIQDLQTNDTREFDILWDGAVVEEGFIPPKLGVTTIHNLSPVTCKGENCIYQLIKTSRSTLPSLLNALEIYTVIQFPRSETNENDVVAVKNIEAAYKLSRIRWQGDPCVPQKYAWDGLNCSNNTDVSKPPRVLSLNLSSSGLTGIIAAAIQNLTHLEKLDLSNNTLTGVVPEFLAQMKSLVIINLSGNNLSGPLPQGLRREGLELLVQGNPRLCLSGSCTEKNSKKKFPVVIVASVASVAIIVAVLVIIFVLSKKKSSTVGALQPPLSMPMVHDNSPEPSIETKKRRFTYSEVIKMTNNFQRVVGEGGFGVVCHGTINGSEQVAVKVLSQSSSQGYKHFKAEVDLLLRVHHTNLVSLVGYCDERDHLALIYEFLPKGDLRQHLSGKSGGSFINWGNRLRIALEAALGLEYLHSGCTPPIVHRDIKTTNILLDEQLKAKLADFGLSRSFPIGGETHISTVVAGTPGYLDPEYYQTTRLGEKSDVYSFGIVLLEIITNQPVIDQSRSKSHISQWVGFELTRGDITKIMDPNLNGDYESRSVWRVLELAMSCANPSSVNRPNMSQVANELKECLVSENLRENMNMDSQNSLKVSMSFDTELFPRAR</sequence>
<feature type="signal peptide" evidence="2">
    <location>
        <begin position="1"/>
        <end position="23"/>
    </location>
</feature>
<feature type="chain" id="PRO_0000387517" description="Probable LRR receptor-like serine/threonine-protein kinase PAM74">
    <location>
        <begin position="24"/>
        <end position="884"/>
    </location>
</feature>
<feature type="topological domain" description="Extracellular" evidence="2">
    <location>
        <begin position="24"/>
        <end position="510"/>
    </location>
</feature>
<feature type="transmembrane region" description="Helical" evidence="2">
    <location>
        <begin position="511"/>
        <end position="531"/>
    </location>
</feature>
<feature type="topological domain" description="Cytoplasmic" evidence="2">
    <location>
        <begin position="532"/>
        <end position="884"/>
    </location>
</feature>
<feature type="repeat" description="LRR 1">
    <location>
        <begin position="412"/>
        <end position="433"/>
    </location>
</feature>
<feature type="repeat" description="LRR 2">
    <location>
        <begin position="436"/>
        <end position="457"/>
    </location>
</feature>
<feature type="repeat" description="LRR 3">
    <location>
        <begin position="460"/>
        <end position="480"/>
    </location>
</feature>
<feature type="domain" description="Protein kinase" evidence="3">
    <location>
        <begin position="579"/>
        <end position="852"/>
    </location>
</feature>
<feature type="active site" description="Proton acceptor" evidence="3 4">
    <location>
        <position position="704"/>
    </location>
</feature>
<feature type="binding site" evidence="3">
    <location>
        <begin position="585"/>
        <end position="593"/>
    </location>
    <ligand>
        <name>ATP</name>
        <dbReference type="ChEBI" id="CHEBI:30616"/>
    </ligand>
</feature>
<feature type="binding site" evidence="3">
    <location>
        <position position="607"/>
    </location>
    <ligand>
        <name>ATP</name>
        <dbReference type="ChEBI" id="CHEBI:30616"/>
    </ligand>
</feature>
<feature type="modified residue" description="Phosphothreonine" evidence="1">
    <location>
        <position position="570"/>
    </location>
</feature>
<feature type="modified residue" description="Phosphotyrosine" evidence="1">
    <location>
        <position position="652"/>
    </location>
</feature>
<feature type="modified residue" description="Phosphoserine" evidence="1">
    <location>
        <position position="738"/>
    </location>
</feature>
<feature type="modified residue" description="Phosphothreonine" evidence="1">
    <location>
        <position position="739"/>
    </location>
</feature>
<feature type="modified residue" description="Phosphothreonine" evidence="1">
    <location>
        <position position="744"/>
    </location>
</feature>
<feature type="modified residue" description="Phosphotyrosine" evidence="1">
    <location>
        <position position="752"/>
    </location>
</feature>
<feature type="glycosylation site" description="N-linked (GlcNAc...) asparagine" evidence="2">
    <location>
        <position position="143"/>
    </location>
</feature>
<feature type="glycosylation site" description="N-linked (GlcNAc...) asparagine" evidence="2">
    <location>
        <position position="182"/>
    </location>
</feature>
<feature type="glycosylation site" description="N-linked (GlcNAc...) asparagine" evidence="2">
    <location>
        <position position="200"/>
    </location>
</feature>
<feature type="glycosylation site" description="N-linked (GlcNAc...) asparagine" evidence="2">
    <location>
        <position position="256"/>
    </location>
</feature>
<feature type="glycosylation site" description="N-linked (GlcNAc...) asparagine" evidence="2">
    <location>
        <position position="289"/>
    </location>
</feature>
<feature type="glycosylation site" description="N-linked (GlcNAc...) asparagine" evidence="2">
    <location>
        <position position="400"/>
    </location>
</feature>
<feature type="glycosylation site" description="N-linked (GlcNAc...) asparagine" evidence="2">
    <location>
        <position position="403"/>
    </location>
</feature>
<feature type="glycosylation site" description="N-linked (GlcNAc...) asparagine" evidence="2">
    <location>
        <position position="417"/>
    </location>
</feature>
<feature type="glycosylation site" description="N-linked (GlcNAc...) asparagine" evidence="2">
    <location>
        <position position="433"/>
    </location>
</feature>
<feature type="glycosylation site" description="N-linked (GlcNAc...) asparagine" evidence="2">
    <location>
        <position position="444"/>
    </location>
</feature>
<feature type="glycosylation site" description="N-linked (GlcNAc...) asparagine" evidence="2">
    <location>
        <position position="465"/>
    </location>
</feature>
<feature type="glycosylation site" description="N-linked (GlcNAc...) asparagine" evidence="2">
    <location>
        <position position="470"/>
    </location>
</feature>
<reference key="1">
    <citation type="journal article" date="1997" name="DNA Res.">
        <title>Structural analysis of Arabidopsis thaliana chromosome 5. II. Sequence features of the regions of 1,044,062 bp covered by thirteen physically assigned P1 clones.</title>
        <authorList>
            <person name="Kotani H."/>
            <person name="Nakamura Y."/>
            <person name="Sato S."/>
            <person name="Kaneko T."/>
            <person name="Asamizu E."/>
            <person name="Miyajima N."/>
            <person name="Tabata S."/>
        </authorList>
    </citation>
    <scope>NUCLEOTIDE SEQUENCE [LARGE SCALE GENOMIC DNA]</scope>
    <source>
        <strain>cv. Columbia</strain>
    </source>
</reference>
<reference key="2">
    <citation type="journal article" date="2017" name="Plant J.">
        <title>Araport11: a complete reannotation of the Arabidopsis thaliana reference genome.</title>
        <authorList>
            <person name="Cheng C.Y."/>
            <person name="Krishnakumar V."/>
            <person name="Chan A.P."/>
            <person name="Thibaud-Nissen F."/>
            <person name="Schobel S."/>
            <person name="Town C.D."/>
        </authorList>
    </citation>
    <scope>GENOME REANNOTATION</scope>
    <source>
        <strain>cv. Columbia</strain>
    </source>
</reference>
<reference key="3">
    <citation type="journal article" date="2010" name="BMC Genomics">
        <title>Genome-wide cloning and sequence analysis of leucine-rich repeat receptor-like protein kinase genes in Arabidopsis thaliana.</title>
        <authorList>
            <person name="Gou X."/>
            <person name="He K."/>
            <person name="Yang H."/>
            <person name="Yuan T."/>
            <person name="Lin H."/>
            <person name="Clouse S.D."/>
            <person name="Li J."/>
        </authorList>
    </citation>
    <scope>NUCLEOTIDE SEQUENCE [LARGE SCALE MRNA]</scope>
    <source>
        <strain>cv. Columbia</strain>
    </source>
</reference>
<reference key="4">
    <citation type="book" date="2007" name="Proceedings of the 18th international conference on Arabidopsis research">
        <title>The pam74 mutant is caused by an insertion in a receptor-like kinase gene.</title>
        <authorList>
            <person name="Awan F.S."/>
            <person name="Schneider A."/>
            <person name="Leister D."/>
            <person name="Khan I.A."/>
        </authorList>
    </citation>
    <scope>FUNCTION</scope>
    <scope>DISRUPTION PHENOTYPE</scope>
</reference>
<reference key="5">
    <citation type="journal article" date="2010" name="Front. Physiol.">
        <title>A membrane protein/signaling protein interaction network for Arabidopsis version AMPv2.</title>
        <authorList>
            <person name="Lalonde S."/>
            <person name="Sero A."/>
            <person name="Pratelli R."/>
            <person name="Pilot G."/>
            <person name="Chen J."/>
            <person name="Sardi M.I."/>
            <person name="Parsa S.A."/>
            <person name="Kim D.Y."/>
            <person name="Acharya B.R."/>
            <person name="Stein E.V."/>
            <person name="Hu H.C."/>
            <person name="Villiers F."/>
            <person name="Takeda K."/>
            <person name="Yang Y."/>
            <person name="Han Y.S."/>
            <person name="Schwacke R."/>
            <person name="Chiang W."/>
            <person name="Kato N."/>
            <person name="Loque D."/>
            <person name="Assmann S.M."/>
            <person name="Kwak J.M."/>
            <person name="Schroeder J.I."/>
            <person name="Rhee S.Y."/>
            <person name="Frommer W.B."/>
        </authorList>
    </citation>
    <scope>INTERACTION WITH AMT1-1</scope>
</reference>
<protein>
    <recommendedName>
        <fullName>Probable LRR receptor-like serine/threonine-protein kinase PAM74</fullName>
        <ecNumber>2.7.11.1</ecNumber>
    </recommendedName>
    <alternativeName>
        <fullName>Protein PHOTOSYNTHESIS AFFECTED MUTANT 74</fullName>
    </alternativeName>
</protein>
<name>PAM74_ARATH</name>
<gene>
    <name type="primary">PAM74</name>
    <name type="ordered locus">At5g59650</name>
    <name type="ORF">MTH12.9</name>
</gene>
<organism>
    <name type="scientific">Arabidopsis thaliana</name>
    <name type="common">Mouse-ear cress</name>
    <dbReference type="NCBI Taxonomy" id="3702"/>
    <lineage>
        <taxon>Eukaryota</taxon>
        <taxon>Viridiplantae</taxon>
        <taxon>Streptophyta</taxon>
        <taxon>Embryophyta</taxon>
        <taxon>Tracheophyta</taxon>
        <taxon>Spermatophyta</taxon>
        <taxon>Magnoliopsida</taxon>
        <taxon>eudicotyledons</taxon>
        <taxon>Gunneridae</taxon>
        <taxon>Pentapetalae</taxon>
        <taxon>rosids</taxon>
        <taxon>malvids</taxon>
        <taxon>Brassicales</taxon>
        <taxon>Brassicaceae</taxon>
        <taxon>Camelineae</taxon>
        <taxon>Arabidopsis</taxon>
    </lineage>
</organism>
<keyword id="KW-0067">ATP-binding</keyword>
<keyword id="KW-0325">Glycoprotein</keyword>
<keyword id="KW-0418">Kinase</keyword>
<keyword id="KW-0433">Leucine-rich repeat</keyword>
<keyword id="KW-0472">Membrane</keyword>
<keyword id="KW-0547">Nucleotide-binding</keyword>
<keyword id="KW-0597">Phosphoprotein</keyword>
<keyword id="KW-0675">Receptor</keyword>
<keyword id="KW-1185">Reference proteome</keyword>
<keyword id="KW-0677">Repeat</keyword>
<keyword id="KW-0723">Serine/threonine-protein kinase</keyword>
<keyword id="KW-0732">Signal</keyword>
<keyword id="KW-0808">Transferase</keyword>
<keyword id="KW-0812">Transmembrane</keyword>
<keyword id="KW-1133">Transmembrane helix</keyword>
<accession>C0LGW2</accession>
<accession>F4KJ90</accession>
<accession>Q9FN96</accession>